<comment type="function">
    <text evidence="1">Probably functions as an alternative splicing regulator. May regulate the mRNA splicing of genes such as CLK1. May act by regulating members of the CLK kinase family (By similarity).</text>
</comment>
<comment type="subunit">
    <text evidence="1">Probably interacts with CLK4.</text>
</comment>
<comment type="interaction">
    <interactant intactId="EBI-751069">
        <id>Q8N2M8</id>
    </interactant>
    <interactant intactId="EBI-8464238">
        <id>Q9NU02</id>
        <label>ANKEF1</label>
    </interactant>
    <organismsDiffer>false</organismsDiffer>
    <experiments>3</experiments>
</comment>
<comment type="interaction">
    <interactant intactId="EBI-751069">
        <id>Q8N2M8</id>
    </interactant>
    <interactant intactId="EBI-1046872">
        <id>Q9Y6A4</id>
        <label>CFAP20</label>
    </interactant>
    <organismsDiffer>false</organismsDiffer>
    <experiments>5</experiments>
</comment>
<comment type="interaction">
    <interactant intactId="EBI-751069">
        <id>Q8N2M8</id>
    </interactant>
    <interactant intactId="EBI-11981867">
        <id>P49759-3</id>
        <label>CLK1</label>
    </interactant>
    <organismsDiffer>false</organismsDiffer>
    <experiments>3</experiments>
</comment>
<comment type="interaction">
    <interactant intactId="EBI-751069">
        <id>Q8N2M8</id>
    </interactant>
    <interactant intactId="EBI-750020">
        <id>P49760</id>
        <label>CLK2</label>
    </interactant>
    <organismsDiffer>false</organismsDiffer>
    <experiments>4</experiments>
</comment>
<comment type="interaction">
    <interactant intactId="EBI-751069">
        <id>Q8N2M8</id>
    </interactant>
    <interactant intactId="EBI-745579">
        <id>P49761</id>
        <label>CLK3</label>
    </interactant>
    <organismsDiffer>false</organismsDiffer>
    <experiments>4</experiments>
</comment>
<comment type="subcellular location">
    <subcellularLocation>
        <location evidence="1">Nucleus</location>
    </subcellularLocation>
</comment>
<comment type="alternative products">
    <event type="alternative splicing"/>
    <isoform>
        <id>Q8N2M8-1</id>
        <name>1</name>
        <sequence type="displayed"/>
    </isoform>
    <isoform>
        <id>Q8N2M8-3</id>
        <name>2</name>
        <sequence type="described" ref="VSP_013894 VSP_013895"/>
    </isoform>
    <isoform>
        <id>Q8N2M8-4</id>
        <name>3</name>
        <sequence type="described" ref="VSP_055717"/>
    </isoform>
</comment>
<comment type="PTM">
    <text evidence="1">Phosphorylated in vitro by CLK4.</text>
</comment>
<comment type="miscellaneous">
    <molecule>Isoform 2</molecule>
    <text evidence="7">May be produced at very low levels due to a premature stop codon in the mRNA, leading to nonsense-mediated mRNA decay.</text>
</comment>
<comment type="similarity">
    <text evidence="7">Belongs to the splicing factor SR family.</text>
</comment>
<comment type="caution">
    <text evidence="7">It is uncertain whether Met-1 or Met-16 is the initiator.</text>
</comment>
<comment type="sequence caution" evidence="7">
    <conflict type="erroneous initiation">
        <sequence resource="EMBL-CDS" id="AAC82339"/>
    </conflict>
    <text>Truncated N-terminus.</text>
</comment>
<comment type="sequence caution" evidence="7">
    <conflict type="erroneous initiation">
        <sequence resource="EMBL-CDS" id="AAC82340"/>
    </conflict>
    <text>Truncated N-terminus.</text>
</comment>
<comment type="sequence caution" evidence="7">
    <conflict type="erroneous initiation">
        <sequence resource="EMBL-CDS" id="AAH80554"/>
    </conflict>
    <text>Truncated N-terminus.</text>
</comment>
<reference key="1">
    <citation type="submission" date="1998-01" db="EMBL/GenBank/DDBJ databases">
        <title>A transcriptional map in the region of 19q13 derived using direct sequencing and exon trapping.</title>
        <authorList>
            <person name="Yoshiura K."/>
            <person name="Murray J.C."/>
        </authorList>
    </citation>
    <scope>NUCLEOTIDE SEQUENCE [GENOMIC DNA / MRNA] (ISOFORM 1)</scope>
</reference>
<reference key="2">
    <citation type="journal article" date="2003" name="Genome Res.">
        <title>The secreted protein discovery initiative (SPDI), a large-scale effort to identify novel human secreted and transmembrane proteins: a bioinformatics assessment.</title>
        <authorList>
            <person name="Clark H.F."/>
            <person name="Gurney A.L."/>
            <person name="Abaya E."/>
            <person name="Baker K."/>
            <person name="Baldwin D.T."/>
            <person name="Brush J."/>
            <person name="Chen J."/>
            <person name="Chow B."/>
            <person name="Chui C."/>
            <person name="Crowley C."/>
            <person name="Currell B."/>
            <person name="Deuel B."/>
            <person name="Dowd P."/>
            <person name="Eaton D."/>
            <person name="Foster J.S."/>
            <person name="Grimaldi C."/>
            <person name="Gu Q."/>
            <person name="Hass P.E."/>
            <person name="Heldens S."/>
            <person name="Huang A."/>
            <person name="Kim H.S."/>
            <person name="Klimowski L."/>
            <person name="Jin Y."/>
            <person name="Johnson S."/>
            <person name="Lee J."/>
            <person name="Lewis L."/>
            <person name="Liao D."/>
            <person name="Mark M.R."/>
            <person name="Robbie E."/>
            <person name="Sanchez C."/>
            <person name="Schoenfeld J."/>
            <person name="Seshagiri S."/>
            <person name="Simmons L."/>
            <person name="Singh J."/>
            <person name="Smith V."/>
            <person name="Stinson J."/>
            <person name="Vagts A."/>
            <person name="Vandlen R.L."/>
            <person name="Watanabe C."/>
            <person name="Wieand D."/>
            <person name="Woods K."/>
            <person name="Xie M.-H."/>
            <person name="Yansura D.G."/>
            <person name="Yi S."/>
            <person name="Yu G."/>
            <person name="Yuan J."/>
            <person name="Zhang M."/>
            <person name="Zhang Z."/>
            <person name="Goddard A.D."/>
            <person name="Wood W.I."/>
            <person name="Godowski P.J."/>
            <person name="Gray A.M."/>
        </authorList>
    </citation>
    <scope>NUCLEOTIDE SEQUENCE [LARGE SCALE MRNA] (ISOFORM 2)</scope>
</reference>
<reference key="3">
    <citation type="journal article" date="2004" name="Nat. Genet.">
        <title>Complete sequencing and characterization of 21,243 full-length human cDNAs.</title>
        <authorList>
            <person name="Ota T."/>
            <person name="Suzuki Y."/>
            <person name="Nishikawa T."/>
            <person name="Otsuki T."/>
            <person name="Sugiyama T."/>
            <person name="Irie R."/>
            <person name="Wakamatsu A."/>
            <person name="Hayashi K."/>
            <person name="Sato H."/>
            <person name="Nagai K."/>
            <person name="Kimura K."/>
            <person name="Makita H."/>
            <person name="Sekine M."/>
            <person name="Obayashi M."/>
            <person name="Nishi T."/>
            <person name="Shibahara T."/>
            <person name="Tanaka T."/>
            <person name="Ishii S."/>
            <person name="Yamamoto J."/>
            <person name="Saito K."/>
            <person name="Kawai Y."/>
            <person name="Isono Y."/>
            <person name="Nakamura Y."/>
            <person name="Nagahari K."/>
            <person name="Murakami K."/>
            <person name="Yasuda T."/>
            <person name="Iwayanagi T."/>
            <person name="Wagatsuma M."/>
            <person name="Shiratori A."/>
            <person name="Sudo H."/>
            <person name="Hosoiri T."/>
            <person name="Kaku Y."/>
            <person name="Kodaira H."/>
            <person name="Kondo H."/>
            <person name="Sugawara M."/>
            <person name="Takahashi M."/>
            <person name="Kanda K."/>
            <person name="Yokoi T."/>
            <person name="Furuya T."/>
            <person name="Kikkawa E."/>
            <person name="Omura Y."/>
            <person name="Abe K."/>
            <person name="Kamihara K."/>
            <person name="Katsuta N."/>
            <person name="Sato K."/>
            <person name="Tanikawa M."/>
            <person name="Yamazaki M."/>
            <person name="Ninomiya K."/>
            <person name="Ishibashi T."/>
            <person name="Yamashita H."/>
            <person name="Murakawa K."/>
            <person name="Fujimori K."/>
            <person name="Tanai H."/>
            <person name="Kimata M."/>
            <person name="Watanabe M."/>
            <person name="Hiraoka S."/>
            <person name="Chiba Y."/>
            <person name="Ishida S."/>
            <person name="Ono Y."/>
            <person name="Takiguchi S."/>
            <person name="Watanabe S."/>
            <person name="Yosida M."/>
            <person name="Hotuta T."/>
            <person name="Kusano J."/>
            <person name="Kanehori K."/>
            <person name="Takahashi-Fujii A."/>
            <person name="Hara H."/>
            <person name="Tanase T.-O."/>
            <person name="Nomura Y."/>
            <person name="Togiya S."/>
            <person name="Komai F."/>
            <person name="Hara R."/>
            <person name="Takeuchi K."/>
            <person name="Arita M."/>
            <person name="Imose N."/>
            <person name="Musashino K."/>
            <person name="Yuuki H."/>
            <person name="Oshima A."/>
            <person name="Sasaki N."/>
            <person name="Aotsuka S."/>
            <person name="Yoshikawa Y."/>
            <person name="Matsunawa H."/>
            <person name="Ichihara T."/>
            <person name="Shiohata N."/>
            <person name="Sano S."/>
            <person name="Moriya S."/>
            <person name="Momiyama H."/>
            <person name="Satoh N."/>
            <person name="Takami S."/>
            <person name="Terashima Y."/>
            <person name="Suzuki O."/>
            <person name="Nakagawa S."/>
            <person name="Senoh A."/>
            <person name="Mizoguchi H."/>
            <person name="Goto Y."/>
            <person name="Shimizu F."/>
            <person name="Wakebe H."/>
            <person name="Hishigaki H."/>
            <person name="Watanabe T."/>
            <person name="Sugiyama A."/>
            <person name="Takemoto M."/>
            <person name="Kawakami B."/>
            <person name="Yamazaki M."/>
            <person name="Watanabe K."/>
            <person name="Kumagai A."/>
            <person name="Itakura S."/>
            <person name="Fukuzumi Y."/>
            <person name="Fujimori Y."/>
            <person name="Komiyama M."/>
            <person name="Tashiro H."/>
            <person name="Tanigami A."/>
            <person name="Fujiwara T."/>
            <person name="Ono T."/>
            <person name="Yamada K."/>
            <person name="Fujii Y."/>
            <person name="Ozaki K."/>
            <person name="Hirao M."/>
            <person name="Ohmori Y."/>
            <person name="Kawabata A."/>
            <person name="Hikiji T."/>
            <person name="Kobatake N."/>
            <person name="Inagaki H."/>
            <person name="Ikema Y."/>
            <person name="Okamoto S."/>
            <person name="Okitani R."/>
            <person name="Kawakami T."/>
            <person name="Noguchi S."/>
            <person name="Itoh T."/>
            <person name="Shigeta K."/>
            <person name="Senba T."/>
            <person name="Matsumura K."/>
            <person name="Nakajima Y."/>
            <person name="Mizuno T."/>
            <person name="Morinaga M."/>
            <person name="Sasaki M."/>
            <person name="Togashi T."/>
            <person name="Oyama M."/>
            <person name="Hata H."/>
            <person name="Watanabe M."/>
            <person name="Komatsu T."/>
            <person name="Mizushima-Sugano J."/>
            <person name="Satoh T."/>
            <person name="Shirai Y."/>
            <person name="Takahashi Y."/>
            <person name="Nakagawa K."/>
            <person name="Okumura K."/>
            <person name="Nagase T."/>
            <person name="Nomura N."/>
            <person name="Kikuchi H."/>
            <person name="Masuho Y."/>
            <person name="Yamashita R."/>
            <person name="Nakai K."/>
            <person name="Yada T."/>
            <person name="Nakamura Y."/>
            <person name="Ohara O."/>
            <person name="Isogai T."/>
            <person name="Sugano S."/>
        </authorList>
    </citation>
    <scope>NUCLEOTIDE SEQUENCE [LARGE SCALE MRNA] (ISOFORM 3)</scope>
</reference>
<reference key="4">
    <citation type="journal article" date="2004" name="Nature">
        <title>The DNA sequence and biology of human chromosome 19.</title>
        <authorList>
            <person name="Grimwood J."/>
            <person name="Gordon L.A."/>
            <person name="Olsen A.S."/>
            <person name="Terry A."/>
            <person name="Schmutz J."/>
            <person name="Lamerdin J.E."/>
            <person name="Hellsten U."/>
            <person name="Goodstein D."/>
            <person name="Couronne O."/>
            <person name="Tran-Gyamfi M."/>
            <person name="Aerts A."/>
            <person name="Altherr M."/>
            <person name="Ashworth L."/>
            <person name="Bajorek E."/>
            <person name="Black S."/>
            <person name="Branscomb E."/>
            <person name="Caenepeel S."/>
            <person name="Carrano A.V."/>
            <person name="Caoile C."/>
            <person name="Chan Y.M."/>
            <person name="Christensen M."/>
            <person name="Cleland C.A."/>
            <person name="Copeland A."/>
            <person name="Dalin E."/>
            <person name="Dehal P."/>
            <person name="Denys M."/>
            <person name="Detter J.C."/>
            <person name="Escobar J."/>
            <person name="Flowers D."/>
            <person name="Fotopulos D."/>
            <person name="Garcia C."/>
            <person name="Georgescu A.M."/>
            <person name="Glavina T."/>
            <person name="Gomez M."/>
            <person name="Gonzales E."/>
            <person name="Groza M."/>
            <person name="Hammon N."/>
            <person name="Hawkins T."/>
            <person name="Haydu L."/>
            <person name="Ho I."/>
            <person name="Huang W."/>
            <person name="Israni S."/>
            <person name="Jett J."/>
            <person name="Kadner K."/>
            <person name="Kimball H."/>
            <person name="Kobayashi A."/>
            <person name="Larionov V."/>
            <person name="Leem S.-H."/>
            <person name="Lopez F."/>
            <person name="Lou Y."/>
            <person name="Lowry S."/>
            <person name="Malfatti S."/>
            <person name="Martinez D."/>
            <person name="McCready P.M."/>
            <person name="Medina C."/>
            <person name="Morgan J."/>
            <person name="Nelson K."/>
            <person name="Nolan M."/>
            <person name="Ovcharenko I."/>
            <person name="Pitluck S."/>
            <person name="Pollard M."/>
            <person name="Popkie A.P."/>
            <person name="Predki P."/>
            <person name="Quan G."/>
            <person name="Ramirez L."/>
            <person name="Rash S."/>
            <person name="Retterer J."/>
            <person name="Rodriguez A."/>
            <person name="Rogers S."/>
            <person name="Salamov A."/>
            <person name="Salazar A."/>
            <person name="She X."/>
            <person name="Smith D."/>
            <person name="Slezak T."/>
            <person name="Solovyev V."/>
            <person name="Thayer N."/>
            <person name="Tice H."/>
            <person name="Tsai M."/>
            <person name="Ustaszewska A."/>
            <person name="Vo N."/>
            <person name="Wagner M."/>
            <person name="Wheeler J."/>
            <person name="Wu K."/>
            <person name="Xie G."/>
            <person name="Yang J."/>
            <person name="Dubchak I."/>
            <person name="Furey T.S."/>
            <person name="DeJong P."/>
            <person name="Dickson M."/>
            <person name="Gordon D."/>
            <person name="Eichler E.E."/>
            <person name="Pennacchio L.A."/>
            <person name="Richardson P."/>
            <person name="Stubbs L."/>
            <person name="Rokhsar D.S."/>
            <person name="Myers R.M."/>
            <person name="Rubin E.M."/>
            <person name="Lucas S.M."/>
        </authorList>
    </citation>
    <scope>NUCLEOTIDE SEQUENCE [LARGE SCALE GENOMIC DNA]</scope>
</reference>
<reference key="5">
    <citation type="submission" date="2005-07" db="EMBL/GenBank/DDBJ databases">
        <authorList>
            <person name="Mural R.J."/>
            <person name="Istrail S."/>
            <person name="Sutton G.G."/>
            <person name="Florea L."/>
            <person name="Halpern A.L."/>
            <person name="Mobarry C.M."/>
            <person name="Lippert R."/>
            <person name="Walenz B."/>
            <person name="Shatkay H."/>
            <person name="Dew I."/>
            <person name="Miller J.R."/>
            <person name="Flanigan M.J."/>
            <person name="Edwards N.J."/>
            <person name="Bolanos R."/>
            <person name="Fasulo D."/>
            <person name="Halldorsson B.V."/>
            <person name="Hannenhalli S."/>
            <person name="Turner R."/>
            <person name="Yooseph S."/>
            <person name="Lu F."/>
            <person name="Nusskern D.R."/>
            <person name="Shue B.C."/>
            <person name="Zheng X.H."/>
            <person name="Zhong F."/>
            <person name="Delcher A.L."/>
            <person name="Huson D.H."/>
            <person name="Kravitz S.A."/>
            <person name="Mouchard L."/>
            <person name="Reinert K."/>
            <person name="Remington K.A."/>
            <person name="Clark A.G."/>
            <person name="Waterman M.S."/>
            <person name="Eichler E.E."/>
            <person name="Adams M.D."/>
            <person name="Hunkapiller M.W."/>
            <person name="Myers E.W."/>
            <person name="Venter J.C."/>
        </authorList>
    </citation>
    <scope>NUCLEOTIDE SEQUENCE [LARGE SCALE GENOMIC DNA]</scope>
</reference>
<reference key="6">
    <citation type="journal article" date="2004" name="Genome Res.">
        <title>The status, quality, and expansion of the NIH full-length cDNA project: the Mammalian Gene Collection (MGC).</title>
        <authorList>
            <consortium name="The MGC Project Team"/>
        </authorList>
    </citation>
    <scope>NUCLEOTIDE SEQUENCE [LARGE SCALE MRNA] (ISOFORM 1)</scope>
    <source>
        <tissue>Skin</tissue>
    </source>
</reference>
<reference key="7">
    <citation type="journal article" date="2006" name="Cell">
        <title>Global, in vivo, and site-specific phosphorylation dynamics in signaling networks.</title>
        <authorList>
            <person name="Olsen J.V."/>
            <person name="Blagoev B."/>
            <person name="Gnad F."/>
            <person name="Macek B."/>
            <person name="Kumar C."/>
            <person name="Mortensen P."/>
            <person name="Mann M."/>
        </authorList>
    </citation>
    <scope>PHOSPHORYLATION [LARGE SCALE ANALYSIS] AT SER-547</scope>
    <scope>IDENTIFICATION BY MASS SPECTROMETRY [LARGE SCALE ANALYSIS]</scope>
    <source>
        <tissue>Cervix carcinoma</tissue>
    </source>
</reference>
<reference key="8">
    <citation type="journal article" date="2008" name="Proc. Natl. Acad. Sci. U.S.A.">
        <title>A quantitative atlas of mitotic phosphorylation.</title>
        <authorList>
            <person name="Dephoure N."/>
            <person name="Zhou C."/>
            <person name="Villen J."/>
            <person name="Beausoleil S.A."/>
            <person name="Bakalarski C.E."/>
            <person name="Elledge S.J."/>
            <person name="Gygi S.P."/>
        </authorList>
    </citation>
    <scope>PHOSPHORYLATION [LARGE SCALE ANALYSIS] AT SER-285; THR-327; SER-331 AND SER-335</scope>
    <scope>IDENTIFICATION BY MASS SPECTROMETRY [LARGE SCALE ANALYSIS]</scope>
    <source>
        <tissue>Cervix carcinoma</tissue>
    </source>
</reference>
<reference key="9">
    <citation type="journal article" date="2009" name="Sci. Signal.">
        <title>Quantitative phosphoproteomic analysis of T cell receptor signaling reveals system-wide modulation of protein-protein interactions.</title>
        <authorList>
            <person name="Mayya V."/>
            <person name="Lundgren D.H."/>
            <person name="Hwang S.-I."/>
            <person name="Rezaul K."/>
            <person name="Wu L."/>
            <person name="Eng J.K."/>
            <person name="Rodionov V."/>
            <person name="Han D.K."/>
        </authorList>
    </citation>
    <scope>PHOSPHORYLATION [LARGE SCALE ANALYSIS] AT SER-331 AND SER-335</scope>
    <scope>IDENTIFICATION BY MASS SPECTROMETRY [LARGE SCALE ANALYSIS]</scope>
    <source>
        <tissue>Leukemic T-cell</tissue>
    </source>
</reference>
<reference key="10">
    <citation type="journal article" date="2010" name="Sci. Signal.">
        <title>Quantitative phosphoproteomics reveals widespread full phosphorylation site occupancy during mitosis.</title>
        <authorList>
            <person name="Olsen J.V."/>
            <person name="Vermeulen M."/>
            <person name="Santamaria A."/>
            <person name="Kumar C."/>
            <person name="Miller M.L."/>
            <person name="Jensen L.J."/>
            <person name="Gnad F."/>
            <person name="Cox J."/>
            <person name="Jensen T.S."/>
            <person name="Nigg E.A."/>
            <person name="Brunak S."/>
            <person name="Mann M."/>
        </authorList>
    </citation>
    <scope>PHOSPHORYLATION [LARGE SCALE ANALYSIS] AT SER-547</scope>
    <scope>IDENTIFICATION BY MASS SPECTROMETRY [LARGE SCALE ANALYSIS]</scope>
    <source>
        <tissue>Cervix carcinoma</tissue>
    </source>
</reference>
<reference key="11">
    <citation type="journal article" date="2011" name="Sci. Signal.">
        <title>System-wide temporal characterization of the proteome and phosphoproteome of human embryonic stem cell differentiation.</title>
        <authorList>
            <person name="Rigbolt K.T."/>
            <person name="Prokhorova T.A."/>
            <person name="Akimov V."/>
            <person name="Henningsen J."/>
            <person name="Johansen P.T."/>
            <person name="Kratchmarova I."/>
            <person name="Kassem M."/>
            <person name="Mann M."/>
            <person name="Olsen J.V."/>
            <person name="Blagoev B."/>
        </authorList>
    </citation>
    <scope>PHOSPHORYLATION [LARGE SCALE ANALYSIS] AT SER-285 AND SER-547</scope>
    <scope>IDENTIFICATION BY MASS SPECTROMETRY [LARGE SCALE ANALYSIS]</scope>
</reference>
<reference key="12">
    <citation type="journal article" date="2013" name="J. Proteome Res.">
        <title>Toward a comprehensive characterization of a human cancer cell phosphoproteome.</title>
        <authorList>
            <person name="Zhou H."/>
            <person name="Di Palma S."/>
            <person name="Preisinger C."/>
            <person name="Peng M."/>
            <person name="Polat A.N."/>
            <person name="Heck A.J."/>
            <person name="Mohammed S."/>
        </authorList>
    </citation>
    <scope>PHOSPHORYLATION [LARGE SCALE ANALYSIS] AT SER-101; SER-285; SER-294; SER-547 AND THR-573</scope>
    <scope>IDENTIFICATION BY MASS SPECTROMETRY [LARGE SCALE ANALYSIS]</scope>
    <source>
        <tissue>Cervix carcinoma</tissue>
        <tissue>Erythroleukemia</tissue>
    </source>
</reference>
<reference key="13">
    <citation type="journal article" date="2014" name="J. Proteomics">
        <title>An enzyme assisted RP-RPLC approach for in-depth analysis of human liver phosphoproteome.</title>
        <authorList>
            <person name="Bian Y."/>
            <person name="Song C."/>
            <person name="Cheng K."/>
            <person name="Dong M."/>
            <person name="Wang F."/>
            <person name="Huang J."/>
            <person name="Sun D."/>
            <person name="Wang L."/>
            <person name="Ye M."/>
            <person name="Zou H."/>
        </authorList>
    </citation>
    <scope>PHOSPHORYLATION [LARGE SCALE ANALYSIS] AT SER-285 AND SER-547</scope>
    <scope>IDENTIFICATION BY MASS SPECTROMETRY [LARGE SCALE ANALYSIS]</scope>
    <source>
        <tissue>Liver</tissue>
    </source>
</reference>
<reference key="14">
    <citation type="journal article" date="2006" name="Science">
        <title>The consensus coding sequences of human breast and colorectal cancers.</title>
        <authorList>
            <person name="Sjoeblom T."/>
            <person name="Jones S."/>
            <person name="Wood L.D."/>
            <person name="Parsons D.W."/>
            <person name="Lin J."/>
            <person name="Barber T.D."/>
            <person name="Mandelker D."/>
            <person name="Leary R.J."/>
            <person name="Ptak J."/>
            <person name="Silliman N."/>
            <person name="Szabo S."/>
            <person name="Buckhaults P."/>
            <person name="Farrell C."/>
            <person name="Meeh P."/>
            <person name="Markowitz S.D."/>
            <person name="Willis J."/>
            <person name="Dawson D."/>
            <person name="Willson J.K.V."/>
            <person name="Gazdar A.F."/>
            <person name="Hartigan J."/>
            <person name="Wu L."/>
            <person name="Liu C."/>
            <person name="Parmigiani G."/>
            <person name="Park B.H."/>
            <person name="Bachman K.E."/>
            <person name="Papadopoulos N."/>
            <person name="Vogelstein B."/>
            <person name="Kinzler K.W."/>
            <person name="Velculescu V.E."/>
        </authorList>
    </citation>
    <scope>VARIANT [LARGE SCALE ANALYSIS] SER-213</scope>
</reference>
<feature type="chain" id="PRO_0000081945" description="CLK4-associating serine/arginine rich protein">
    <location>
        <begin position="1"/>
        <end position="674"/>
    </location>
</feature>
<feature type="region of interest" description="Disordered" evidence="3">
    <location>
        <begin position="171"/>
        <end position="232"/>
    </location>
</feature>
<feature type="region of interest" description="Disordered" evidence="3">
    <location>
        <begin position="258"/>
        <end position="674"/>
    </location>
</feature>
<feature type="coiled-coil region" evidence="2">
    <location>
        <begin position="585"/>
        <end position="647"/>
    </location>
</feature>
<feature type="compositionally biased region" description="Acidic residues" evidence="3">
    <location>
        <begin position="182"/>
        <end position="214"/>
    </location>
</feature>
<feature type="compositionally biased region" description="Basic residues" evidence="3">
    <location>
        <begin position="265"/>
        <end position="283"/>
    </location>
</feature>
<feature type="compositionally biased region" description="Basic and acidic residues" evidence="3">
    <location>
        <begin position="290"/>
        <end position="313"/>
    </location>
</feature>
<feature type="compositionally biased region" description="Pro residues" evidence="3">
    <location>
        <begin position="356"/>
        <end position="365"/>
    </location>
</feature>
<feature type="compositionally biased region" description="Low complexity" evidence="3">
    <location>
        <begin position="378"/>
        <end position="399"/>
    </location>
</feature>
<feature type="compositionally biased region" description="Basic residues" evidence="3">
    <location>
        <begin position="411"/>
        <end position="443"/>
    </location>
</feature>
<feature type="compositionally biased region" description="Basic residues" evidence="3">
    <location>
        <begin position="481"/>
        <end position="492"/>
    </location>
</feature>
<feature type="compositionally biased region" description="Low complexity" evidence="3">
    <location>
        <begin position="493"/>
        <end position="506"/>
    </location>
</feature>
<feature type="compositionally biased region" description="Low complexity" evidence="3">
    <location>
        <begin position="514"/>
        <end position="532"/>
    </location>
</feature>
<feature type="compositionally biased region" description="Basic and acidic residues" evidence="3">
    <location>
        <begin position="590"/>
        <end position="617"/>
    </location>
</feature>
<feature type="compositionally biased region" description="Basic and acidic residues" evidence="3">
    <location>
        <begin position="625"/>
        <end position="641"/>
    </location>
</feature>
<feature type="compositionally biased region" description="Low complexity" evidence="3">
    <location>
        <begin position="642"/>
        <end position="651"/>
    </location>
</feature>
<feature type="compositionally biased region" description="Basic residues" evidence="3">
    <location>
        <begin position="659"/>
        <end position="674"/>
    </location>
</feature>
<feature type="modified residue" description="Phosphoserine" evidence="13">
    <location>
        <position position="101"/>
    </location>
</feature>
<feature type="modified residue" description="Phosphoserine" evidence="9 12 13 14">
    <location>
        <position position="285"/>
    </location>
</feature>
<feature type="modified residue" description="Phosphoserine" evidence="13">
    <location>
        <position position="294"/>
    </location>
</feature>
<feature type="modified residue" description="Phosphothreonine" evidence="9">
    <location>
        <position position="327"/>
    </location>
</feature>
<feature type="modified residue" description="Phosphoserine" evidence="9 10">
    <location>
        <position position="331"/>
    </location>
</feature>
<feature type="modified residue" description="Phosphoserine" evidence="9 10">
    <location>
        <position position="335"/>
    </location>
</feature>
<feature type="modified residue" description="Phosphoserine" evidence="8 11 12 13 14">
    <location>
        <position position="547"/>
    </location>
</feature>
<feature type="modified residue" description="Phosphothreonine" evidence="13">
    <location>
        <position position="573"/>
    </location>
</feature>
<feature type="splice variant" id="VSP_055717" description="In isoform 3." evidence="6">
    <location>
        <begin position="42"/>
        <end position="103"/>
    </location>
</feature>
<feature type="splice variant" id="VSP_013894" description="In isoform 2." evidence="5">
    <original>PKLTPQEKLKLRMQKALNRQFKADK</original>
    <variation>VTQADASGEAETEDAEGAEQAVQGG</variation>
    <location>
        <begin position="570"/>
        <end position="594"/>
    </location>
</feature>
<feature type="splice variant" id="VSP_013895" description="In isoform 2." evidence="5">
    <location>
        <begin position="595"/>
        <end position="674"/>
    </location>
</feature>
<feature type="sequence variant" id="VAR_035490" description="In a breast cancer sample; somatic mutation." evidence="4">
    <original>L</original>
    <variation>S</variation>
    <location>
        <position position="213"/>
    </location>
</feature>
<keyword id="KW-0025">Alternative splicing</keyword>
<keyword id="KW-0175">Coiled coil</keyword>
<keyword id="KW-0507">mRNA processing</keyword>
<keyword id="KW-0508">mRNA splicing</keyword>
<keyword id="KW-0539">Nucleus</keyword>
<keyword id="KW-0597">Phosphoprotein</keyword>
<keyword id="KW-1267">Proteomics identification</keyword>
<keyword id="KW-1185">Reference proteome</keyword>
<dbReference type="EMBL" id="AF042800">
    <property type="protein sequence ID" value="AAC82339.1"/>
    <property type="status" value="ALT_INIT"/>
    <property type="molecule type" value="mRNA"/>
</dbReference>
<dbReference type="EMBL" id="AF042810">
    <property type="protein sequence ID" value="AAC82340.1"/>
    <property type="status" value="ALT_INIT"/>
    <property type="molecule type" value="Genomic_DNA"/>
</dbReference>
<dbReference type="EMBL" id="AF042802">
    <property type="protein sequence ID" value="AAC82340.1"/>
    <property type="status" value="JOINED"/>
    <property type="molecule type" value="Genomic_DNA"/>
</dbReference>
<dbReference type="EMBL" id="AF042803">
    <property type="protein sequence ID" value="AAC82340.1"/>
    <property type="status" value="JOINED"/>
    <property type="molecule type" value="Genomic_DNA"/>
</dbReference>
<dbReference type="EMBL" id="AF042804">
    <property type="protein sequence ID" value="AAC82340.1"/>
    <property type="status" value="JOINED"/>
    <property type="molecule type" value="Genomic_DNA"/>
</dbReference>
<dbReference type="EMBL" id="AF042805">
    <property type="protein sequence ID" value="AAC82340.1"/>
    <property type="status" value="JOINED"/>
    <property type="molecule type" value="Genomic_DNA"/>
</dbReference>
<dbReference type="EMBL" id="AF042806">
    <property type="protein sequence ID" value="AAC82340.1"/>
    <property type="status" value="JOINED"/>
    <property type="molecule type" value="Genomic_DNA"/>
</dbReference>
<dbReference type="EMBL" id="AF042807">
    <property type="protein sequence ID" value="AAC82340.1"/>
    <property type="status" value="JOINED"/>
    <property type="molecule type" value="Genomic_DNA"/>
</dbReference>
<dbReference type="EMBL" id="AF042808">
    <property type="protein sequence ID" value="AAC82340.1"/>
    <property type="status" value="JOINED"/>
    <property type="molecule type" value="Genomic_DNA"/>
</dbReference>
<dbReference type="EMBL" id="AF042809">
    <property type="protein sequence ID" value="AAC82340.1"/>
    <property type="status" value="JOINED"/>
    <property type="molecule type" value="Genomic_DNA"/>
</dbReference>
<dbReference type="EMBL" id="AY358944">
    <property type="protein sequence ID" value="AAQ89303.1"/>
    <property type="molecule type" value="mRNA"/>
</dbReference>
<dbReference type="EMBL" id="AK293333">
    <property type="protein sequence ID" value="BAG56849.1"/>
    <property type="molecule type" value="mRNA"/>
</dbReference>
<dbReference type="EMBL" id="AC011489">
    <property type="status" value="NOT_ANNOTATED_CDS"/>
    <property type="molecule type" value="Genomic_DNA"/>
</dbReference>
<dbReference type="EMBL" id="KF456584">
    <property type="status" value="NOT_ANNOTATED_CDS"/>
    <property type="molecule type" value="Genomic_DNA"/>
</dbReference>
<dbReference type="EMBL" id="CH471126">
    <property type="protein sequence ID" value="EAW57317.1"/>
    <property type="molecule type" value="Genomic_DNA"/>
</dbReference>
<dbReference type="EMBL" id="BC080554">
    <property type="protein sequence ID" value="AAH80554.1"/>
    <property type="status" value="ALT_INIT"/>
    <property type="molecule type" value="mRNA"/>
</dbReference>
<dbReference type="CCDS" id="CCDS12652.2">
    <molecule id="Q8N2M8-1"/>
</dbReference>
<dbReference type="CCDS" id="CCDS62710.1">
    <molecule id="Q8N2M8-4"/>
</dbReference>
<dbReference type="RefSeq" id="NP_001265368.1">
    <molecule id="Q8N2M8-4"/>
    <property type="nucleotide sequence ID" value="NM_001278439.2"/>
</dbReference>
<dbReference type="RefSeq" id="NP_008987.2">
    <molecule id="Q8N2M8-1"/>
    <property type="nucleotide sequence ID" value="NM_007056.3"/>
</dbReference>
<dbReference type="RefSeq" id="XP_047294072.1">
    <molecule id="Q8N2M8-3"/>
    <property type="nucleotide sequence ID" value="XM_047438116.1"/>
</dbReference>
<dbReference type="RefSeq" id="XP_054175647.1">
    <molecule id="Q8N2M8-3"/>
    <property type="nucleotide sequence ID" value="XM_054319672.1"/>
</dbReference>
<dbReference type="SMR" id="Q8N2M8"/>
<dbReference type="BioGRID" id="116302">
    <property type="interactions" value="95"/>
</dbReference>
<dbReference type="FunCoup" id="Q8N2M8">
    <property type="interactions" value="2228"/>
</dbReference>
<dbReference type="IntAct" id="Q8N2M8">
    <property type="interactions" value="56"/>
</dbReference>
<dbReference type="STRING" id="9606.ENSP00000221455"/>
<dbReference type="GlyCosmos" id="Q8N2M8">
    <property type="glycosylation" value="1 site, 1 glycan"/>
</dbReference>
<dbReference type="GlyGen" id="Q8N2M8">
    <property type="glycosylation" value="5 sites, 1 O-linked glycan (4 sites)"/>
</dbReference>
<dbReference type="iPTMnet" id="Q8N2M8"/>
<dbReference type="PhosphoSitePlus" id="Q8N2M8"/>
<dbReference type="BioMuta" id="CLASRP"/>
<dbReference type="DMDM" id="226694202"/>
<dbReference type="jPOST" id="Q8N2M8"/>
<dbReference type="MassIVE" id="Q8N2M8"/>
<dbReference type="PaxDb" id="9606-ENSP00000221455"/>
<dbReference type="PeptideAtlas" id="Q8N2M8"/>
<dbReference type="ProteomicsDB" id="30495"/>
<dbReference type="ProteomicsDB" id="71717">
    <molecule id="Q8N2M8-1"/>
</dbReference>
<dbReference type="ProteomicsDB" id="71718">
    <molecule id="Q8N2M8-3"/>
</dbReference>
<dbReference type="Pumba" id="Q8N2M8"/>
<dbReference type="Antibodypedia" id="54055">
    <property type="antibodies" value="72 antibodies from 18 providers"/>
</dbReference>
<dbReference type="DNASU" id="11129"/>
<dbReference type="Ensembl" id="ENST00000221455.8">
    <molecule id="Q8N2M8-1"/>
    <property type="protein sequence ID" value="ENSP00000221455.3"/>
    <property type="gene ID" value="ENSG00000104859.15"/>
</dbReference>
<dbReference type="Ensembl" id="ENST00000391952.7">
    <molecule id="Q8N2M8-3"/>
    <property type="protein sequence ID" value="ENSP00000375814.2"/>
    <property type="gene ID" value="ENSG00000104859.15"/>
</dbReference>
<dbReference type="Ensembl" id="ENST00000391953.8">
    <molecule id="Q8N2M8-4"/>
    <property type="protein sequence ID" value="ENSP00000375815.3"/>
    <property type="gene ID" value="ENSG00000104859.15"/>
</dbReference>
<dbReference type="GeneID" id="11129"/>
<dbReference type="KEGG" id="hsa:11129"/>
<dbReference type="MANE-Select" id="ENST00000221455.8">
    <property type="protein sequence ID" value="ENSP00000221455.3"/>
    <property type="RefSeq nucleotide sequence ID" value="NM_007056.3"/>
    <property type="RefSeq protein sequence ID" value="NP_008987.2"/>
</dbReference>
<dbReference type="UCSC" id="uc010xxh.3">
    <molecule id="Q8N2M8-1"/>
    <property type="organism name" value="human"/>
</dbReference>
<dbReference type="AGR" id="HGNC:17731"/>
<dbReference type="CTD" id="11129"/>
<dbReference type="DisGeNET" id="11129"/>
<dbReference type="GeneCards" id="CLASRP"/>
<dbReference type="HGNC" id="HGNC:17731">
    <property type="gene designation" value="CLASRP"/>
</dbReference>
<dbReference type="HPA" id="ENSG00000104859">
    <property type="expression patterns" value="Low tissue specificity"/>
</dbReference>
<dbReference type="MIM" id="618532">
    <property type="type" value="gene"/>
</dbReference>
<dbReference type="neXtProt" id="NX_Q8N2M8"/>
<dbReference type="OpenTargets" id="ENSG00000104859"/>
<dbReference type="PharmGKB" id="PA134961731"/>
<dbReference type="VEuPathDB" id="HostDB:ENSG00000104859"/>
<dbReference type="eggNOG" id="KOG2548">
    <property type="taxonomic scope" value="Eukaryota"/>
</dbReference>
<dbReference type="GeneTree" id="ENSGT00940000153892"/>
<dbReference type="HOGENOM" id="CLU_008114_1_0_1"/>
<dbReference type="InParanoid" id="Q8N2M8"/>
<dbReference type="OMA" id="YSECAPV"/>
<dbReference type="OrthoDB" id="10070965at2759"/>
<dbReference type="PAN-GO" id="Q8N2M8">
    <property type="GO annotations" value="0 GO annotations based on evolutionary models"/>
</dbReference>
<dbReference type="PhylomeDB" id="Q8N2M8"/>
<dbReference type="TreeFam" id="TF351621"/>
<dbReference type="PathwayCommons" id="Q8N2M8"/>
<dbReference type="SignaLink" id="Q8N2M8"/>
<dbReference type="BioGRID-ORCS" id="11129">
    <property type="hits" value="391 hits in 1173 CRISPR screens"/>
</dbReference>
<dbReference type="ChiTaRS" id="CLASRP">
    <property type="organism name" value="human"/>
</dbReference>
<dbReference type="GeneWiki" id="SFRS16"/>
<dbReference type="GenomeRNAi" id="11129"/>
<dbReference type="Pharos" id="Q8N2M8">
    <property type="development level" value="Tbio"/>
</dbReference>
<dbReference type="PRO" id="PR:Q8N2M8"/>
<dbReference type="Proteomes" id="UP000005640">
    <property type="component" value="Chromosome 19"/>
</dbReference>
<dbReference type="RNAct" id="Q8N2M8">
    <property type="molecule type" value="protein"/>
</dbReference>
<dbReference type="Bgee" id="ENSG00000104859">
    <property type="expression patterns" value="Expressed in adenohypophysis and 192 other cell types or tissues"/>
</dbReference>
<dbReference type="ExpressionAtlas" id="Q8N2M8">
    <property type="expression patterns" value="baseline and differential"/>
</dbReference>
<dbReference type="GO" id="GO:0005654">
    <property type="term" value="C:nucleoplasm"/>
    <property type="evidence" value="ECO:0000314"/>
    <property type="project" value="HPA"/>
</dbReference>
<dbReference type="GO" id="GO:0006397">
    <property type="term" value="P:mRNA processing"/>
    <property type="evidence" value="ECO:0007669"/>
    <property type="project" value="UniProtKB-KW"/>
</dbReference>
<dbReference type="GO" id="GO:0008380">
    <property type="term" value="P:RNA splicing"/>
    <property type="evidence" value="ECO:0007669"/>
    <property type="project" value="UniProtKB-KW"/>
</dbReference>
<dbReference type="InterPro" id="IPR040397">
    <property type="entry name" value="SWAP"/>
</dbReference>
<dbReference type="InterPro" id="IPR019147">
    <property type="entry name" value="SWAP_N_domain"/>
</dbReference>
<dbReference type="PANTHER" id="PTHR13161:SF4">
    <property type="entry name" value="CLK4-ASSOCIATING SERINE_ARGININE RICH PROTEIN"/>
    <property type="match status" value="1"/>
</dbReference>
<dbReference type="PANTHER" id="PTHR13161">
    <property type="entry name" value="SPLICING FACTOR SUPPRESSOR OF WHITE APRICOT"/>
    <property type="match status" value="1"/>
</dbReference>
<dbReference type="Pfam" id="PF09750">
    <property type="entry name" value="DRY_EERY"/>
    <property type="match status" value="1"/>
</dbReference>
<dbReference type="SMART" id="SM01141">
    <property type="entry name" value="DRY_EERY"/>
    <property type="match status" value="1"/>
</dbReference>
<name>CLASR_HUMAN</name>
<protein>
    <recommendedName>
        <fullName>CLK4-associating serine/arginine rich protein</fullName>
    </recommendedName>
    <alternativeName>
        <fullName>Splicing factor, arginine/serine-rich 16</fullName>
    </alternativeName>
    <alternativeName>
        <fullName>Suppressor of white-apricot homolog 2</fullName>
    </alternativeName>
</protein>
<sequence>MWHEARKHERKLRGMMVDYKKRAERRREYYEKIKKDPAQFLQVHGRACKVHLDSAVALAAESPVNMMPWQGDTNNMIDRFDVRAHLDHIPDYTPPLLTTISPEQESDERKCNYERYRGLVQNDFAGISEEQCLYQIYIDELYGGLQRPSEDEKKKLAEKKASIGYTYEDSTVAEVEKAAEKPEEEESAAEEESNSDEDEVIPDIDVEVDVDELNQEQVADLNKQATTYGMADGDFVRMLRKDKEEAEAIKHAKALEEEKAMYSGRRSRRQRREFREKRLRGRKISPPSYARRDSPTYDPYKRSPSESSSESRSRSRSPTPGREEKITFITSFGGSDEEAAAAAAAAAASGVTTGKPPAPPQPGGPAPGRNASARRRSSSSSSSSSASRTSSSRSSSRSSSRSRRGGGYYRSGRHARSRSRSWSRSRSRSRRYSRSRSRGRRHSGGGSRDGHRYSRSPARRGGYGPRRRSRSRSHSGDRYRRGGRGLRHHSSSRSRSSWSLSPSRSRSLTRSRSHSPSPSQSRSRSRSRSQSPSPSPAREKLTRPAASPAVGEKLKKTEPAAGKETGAAKPKLTPQEKLKLRMQKALNRQFKADKKAAQEKMIQQEHERQEREDELRAMARKIRMKERERREKEREEWERQYSRQSRSPSPRYSREYSSSRRRSRSRSRSPHYRH</sequence>
<proteinExistence type="evidence at protein level"/>
<organism>
    <name type="scientific">Homo sapiens</name>
    <name type="common">Human</name>
    <dbReference type="NCBI Taxonomy" id="9606"/>
    <lineage>
        <taxon>Eukaryota</taxon>
        <taxon>Metazoa</taxon>
        <taxon>Chordata</taxon>
        <taxon>Craniata</taxon>
        <taxon>Vertebrata</taxon>
        <taxon>Euteleostomi</taxon>
        <taxon>Mammalia</taxon>
        <taxon>Eutheria</taxon>
        <taxon>Euarchontoglires</taxon>
        <taxon>Primates</taxon>
        <taxon>Haplorrhini</taxon>
        <taxon>Catarrhini</taxon>
        <taxon>Hominidae</taxon>
        <taxon>Homo</taxon>
    </lineage>
</organism>
<evidence type="ECO:0000250" key="1"/>
<evidence type="ECO:0000255" key="2"/>
<evidence type="ECO:0000256" key="3">
    <source>
        <dbReference type="SAM" id="MobiDB-lite"/>
    </source>
</evidence>
<evidence type="ECO:0000269" key="4">
    <source>
    </source>
</evidence>
<evidence type="ECO:0000303" key="5">
    <source>
    </source>
</evidence>
<evidence type="ECO:0000303" key="6">
    <source>
    </source>
</evidence>
<evidence type="ECO:0000305" key="7"/>
<evidence type="ECO:0007744" key="8">
    <source>
    </source>
</evidence>
<evidence type="ECO:0007744" key="9">
    <source>
    </source>
</evidence>
<evidence type="ECO:0007744" key="10">
    <source>
    </source>
</evidence>
<evidence type="ECO:0007744" key="11">
    <source>
    </source>
</evidence>
<evidence type="ECO:0007744" key="12">
    <source>
    </source>
</evidence>
<evidence type="ECO:0007744" key="13">
    <source>
    </source>
</evidence>
<evidence type="ECO:0007744" key="14">
    <source>
    </source>
</evidence>
<gene>
    <name type="primary">CLASRP</name>
    <name type="synonym">SFRS16</name>
    <name type="synonym">SWAP2</name>
    <name type="ORF">UNQ2428/PRO4988</name>
</gene>
<accession>Q8N2M8</accession>
<accession>A0A0A0MQS2</accession>
<accession>B4DDT8</accession>
<accession>F8WAG9</accession>
<accession>O96026</accession>
<accession>Q6UW71</accession>
<accession>Q96DX2</accession>